<gene>
    <name evidence="1" type="primary">csrA</name>
    <name type="ordered locus">Sden_1214</name>
</gene>
<evidence type="ECO:0000255" key="1">
    <source>
        <dbReference type="HAMAP-Rule" id="MF_00167"/>
    </source>
</evidence>
<name>CSRA_SHEDO</name>
<keyword id="KW-0010">Activator</keyword>
<keyword id="KW-0963">Cytoplasm</keyword>
<keyword id="KW-1185">Reference proteome</keyword>
<keyword id="KW-0678">Repressor</keyword>
<keyword id="KW-0694">RNA-binding</keyword>
<keyword id="KW-0810">Translation regulation</keyword>
<feature type="chain" id="PRO_1000023418" description="Translational regulator CsrA">
    <location>
        <begin position="1"/>
        <end position="65"/>
    </location>
</feature>
<dbReference type="EMBL" id="CP000302">
    <property type="protein sequence ID" value="ABE54500.1"/>
    <property type="molecule type" value="Genomic_DNA"/>
</dbReference>
<dbReference type="RefSeq" id="WP_011495659.1">
    <property type="nucleotide sequence ID" value="NC_007954.1"/>
</dbReference>
<dbReference type="SMR" id="Q12PX6"/>
<dbReference type="STRING" id="318161.Sden_1214"/>
<dbReference type="KEGG" id="sdn:Sden_1214"/>
<dbReference type="eggNOG" id="COG1551">
    <property type="taxonomic scope" value="Bacteria"/>
</dbReference>
<dbReference type="HOGENOM" id="CLU_164837_2_2_6"/>
<dbReference type="OrthoDB" id="9809061at2"/>
<dbReference type="Proteomes" id="UP000001982">
    <property type="component" value="Chromosome"/>
</dbReference>
<dbReference type="GO" id="GO:0005829">
    <property type="term" value="C:cytosol"/>
    <property type="evidence" value="ECO:0007669"/>
    <property type="project" value="TreeGrafter"/>
</dbReference>
<dbReference type="GO" id="GO:0048027">
    <property type="term" value="F:mRNA 5'-UTR binding"/>
    <property type="evidence" value="ECO:0007669"/>
    <property type="project" value="UniProtKB-UniRule"/>
</dbReference>
<dbReference type="GO" id="GO:0006402">
    <property type="term" value="P:mRNA catabolic process"/>
    <property type="evidence" value="ECO:0007669"/>
    <property type="project" value="InterPro"/>
</dbReference>
<dbReference type="GO" id="GO:0045947">
    <property type="term" value="P:negative regulation of translational initiation"/>
    <property type="evidence" value="ECO:0007669"/>
    <property type="project" value="UniProtKB-UniRule"/>
</dbReference>
<dbReference type="GO" id="GO:0045948">
    <property type="term" value="P:positive regulation of translational initiation"/>
    <property type="evidence" value="ECO:0007669"/>
    <property type="project" value="UniProtKB-UniRule"/>
</dbReference>
<dbReference type="GO" id="GO:0006109">
    <property type="term" value="P:regulation of carbohydrate metabolic process"/>
    <property type="evidence" value="ECO:0007669"/>
    <property type="project" value="UniProtKB-UniRule"/>
</dbReference>
<dbReference type="FunFam" id="2.60.40.4380:FF:000001">
    <property type="entry name" value="Translational regulator CsrA"/>
    <property type="match status" value="1"/>
</dbReference>
<dbReference type="Gene3D" id="2.60.40.4380">
    <property type="entry name" value="Translational regulator CsrA"/>
    <property type="match status" value="1"/>
</dbReference>
<dbReference type="HAMAP" id="MF_00167">
    <property type="entry name" value="CsrA"/>
    <property type="match status" value="1"/>
</dbReference>
<dbReference type="InterPro" id="IPR003751">
    <property type="entry name" value="CsrA"/>
</dbReference>
<dbReference type="InterPro" id="IPR036107">
    <property type="entry name" value="CsrA_sf"/>
</dbReference>
<dbReference type="NCBIfam" id="TIGR00202">
    <property type="entry name" value="csrA"/>
    <property type="match status" value="1"/>
</dbReference>
<dbReference type="NCBIfam" id="NF002469">
    <property type="entry name" value="PRK01712.1"/>
    <property type="match status" value="1"/>
</dbReference>
<dbReference type="PANTHER" id="PTHR34984">
    <property type="entry name" value="CARBON STORAGE REGULATOR"/>
    <property type="match status" value="1"/>
</dbReference>
<dbReference type="PANTHER" id="PTHR34984:SF1">
    <property type="entry name" value="CARBON STORAGE REGULATOR"/>
    <property type="match status" value="1"/>
</dbReference>
<dbReference type="Pfam" id="PF02599">
    <property type="entry name" value="CsrA"/>
    <property type="match status" value="1"/>
</dbReference>
<dbReference type="SUPFAM" id="SSF117130">
    <property type="entry name" value="CsrA-like"/>
    <property type="match status" value="1"/>
</dbReference>
<proteinExistence type="inferred from homology"/>
<organism>
    <name type="scientific">Shewanella denitrificans (strain OS217 / ATCC BAA-1090 / DSM 15013)</name>
    <dbReference type="NCBI Taxonomy" id="318161"/>
    <lineage>
        <taxon>Bacteria</taxon>
        <taxon>Pseudomonadati</taxon>
        <taxon>Pseudomonadota</taxon>
        <taxon>Gammaproteobacteria</taxon>
        <taxon>Alteromonadales</taxon>
        <taxon>Shewanellaceae</taxon>
        <taxon>Shewanella</taxon>
    </lineage>
</organism>
<accession>Q12PX6</accession>
<sequence>MLILTRRVGETLMIGDEVTVTVLGVKGNQVRIGVNAPKEVSVHREEIYQRIQNEKSDPSSESGNF</sequence>
<reference key="1">
    <citation type="submission" date="2006-03" db="EMBL/GenBank/DDBJ databases">
        <title>Complete sequence of Shewanella denitrificans OS217.</title>
        <authorList>
            <consortium name="US DOE Joint Genome Institute"/>
            <person name="Copeland A."/>
            <person name="Lucas S."/>
            <person name="Lapidus A."/>
            <person name="Barry K."/>
            <person name="Detter J.C."/>
            <person name="Glavina del Rio T."/>
            <person name="Hammon N."/>
            <person name="Israni S."/>
            <person name="Dalin E."/>
            <person name="Tice H."/>
            <person name="Pitluck S."/>
            <person name="Brettin T."/>
            <person name="Bruce D."/>
            <person name="Han C."/>
            <person name="Tapia R."/>
            <person name="Gilna P."/>
            <person name="Kiss H."/>
            <person name="Schmutz J."/>
            <person name="Larimer F."/>
            <person name="Land M."/>
            <person name="Hauser L."/>
            <person name="Kyrpides N."/>
            <person name="Lykidis A."/>
            <person name="Richardson P."/>
        </authorList>
    </citation>
    <scope>NUCLEOTIDE SEQUENCE [LARGE SCALE GENOMIC DNA]</scope>
    <source>
        <strain>OS217 / ATCC BAA-1090 / DSM 15013</strain>
    </source>
</reference>
<protein>
    <recommendedName>
        <fullName evidence="1">Translational regulator CsrA</fullName>
    </recommendedName>
    <alternativeName>
        <fullName evidence="1">Carbon storage regulator</fullName>
    </alternativeName>
</protein>
<comment type="function">
    <text evidence="1">A key translational regulator that binds mRNA to regulate translation initiation and/or mRNA stability. Mediates global changes in gene expression, shifting from rapid growth to stress survival by linking envelope stress, the stringent response and the catabolite repression systems. Usually binds in the 5'-UTR; binding at or near the Shine-Dalgarno sequence prevents ribosome-binding, repressing translation, binding elsewhere in the 5'-UTR can activate translation and/or stabilize the mRNA. Its function is antagonized by small RNA(s).</text>
</comment>
<comment type="subunit">
    <text evidence="1">Homodimer; the beta-strands of each monomer intercalate to form a hydrophobic core, while the alpha-helices form wings that extend away from the core.</text>
</comment>
<comment type="subcellular location">
    <subcellularLocation>
        <location evidence="1">Cytoplasm</location>
    </subcellularLocation>
</comment>
<comment type="similarity">
    <text evidence="1">Belongs to the CsrA/RsmA family.</text>
</comment>